<sequence length="320" mass="34655">MKIIFAGTPEFAATALAALLKTSHEIIAVYTQPDRKAGRGQKLTPSPVKQLALEHNIPVYQPLHFKASTEEGLAAQQELAALGADVMVVAAYGLILPQAVLDTPKYGCLNIHGSLLPRWRGAAPIQRAIATGDDETGITIMQMAAGLDTGDMMYKTYCPITSEDTSATLHDKLAAQGATAICAVLESEETLQKYLAEREVQDESLTVYAHKLVKSEARIDWSMNAVQVDRNIRAFNPWPVAFIQLDENNALRVWNSTISSQSKVNAQAGEIIAIDKQGVHVACGENTFICLTSVQWPGGKALNAQQIAQTQKLHVGQILP</sequence>
<name>FMT_ACIBT</name>
<reference key="1">
    <citation type="journal article" date="2007" name="Genes Dev.">
        <title>New insights into Acinetobacter baumannii pathogenesis revealed by high-density pyrosequencing and transposon mutagenesis.</title>
        <authorList>
            <person name="Smith M.G."/>
            <person name="Gianoulis T.A."/>
            <person name="Pukatzki S."/>
            <person name="Mekalanos J.J."/>
            <person name="Ornston L.N."/>
            <person name="Gerstein M."/>
            <person name="Snyder M."/>
        </authorList>
    </citation>
    <scope>NUCLEOTIDE SEQUENCE [LARGE SCALE GENOMIC DNA]</scope>
    <source>
        <strain>ATCC 17978 / DSM 105126 / CIP 53.77 / LMG 1025 / NCDC KC755 / 5377</strain>
    </source>
</reference>
<feature type="chain" id="PRO_1000098369" description="Methionyl-tRNA formyltransferase">
    <location>
        <begin position="1"/>
        <end position="320"/>
    </location>
</feature>
<feature type="binding site" evidence="1">
    <location>
        <begin position="114"/>
        <end position="117"/>
    </location>
    <ligand>
        <name>(6S)-5,6,7,8-tetrahydrofolate</name>
        <dbReference type="ChEBI" id="CHEBI:57453"/>
    </ligand>
</feature>
<dbReference type="EC" id="2.1.2.9" evidence="1"/>
<dbReference type="EMBL" id="CP000521">
    <property type="protein sequence ID" value="ABO13845.2"/>
    <property type="molecule type" value="Genomic_DNA"/>
</dbReference>
<dbReference type="RefSeq" id="WP_000691200.1">
    <property type="nucleotide sequence ID" value="NZ_CP053098.1"/>
</dbReference>
<dbReference type="SMR" id="A3MAA1"/>
<dbReference type="KEGG" id="acb:A1S_3456"/>
<dbReference type="HOGENOM" id="CLU_033347_1_2_6"/>
<dbReference type="GO" id="GO:0005829">
    <property type="term" value="C:cytosol"/>
    <property type="evidence" value="ECO:0007669"/>
    <property type="project" value="TreeGrafter"/>
</dbReference>
<dbReference type="GO" id="GO:0004479">
    <property type="term" value="F:methionyl-tRNA formyltransferase activity"/>
    <property type="evidence" value="ECO:0007669"/>
    <property type="project" value="UniProtKB-UniRule"/>
</dbReference>
<dbReference type="CDD" id="cd08646">
    <property type="entry name" value="FMT_core_Met-tRNA-FMT_N"/>
    <property type="match status" value="1"/>
</dbReference>
<dbReference type="CDD" id="cd08704">
    <property type="entry name" value="Met_tRNA_FMT_C"/>
    <property type="match status" value="1"/>
</dbReference>
<dbReference type="Gene3D" id="3.10.25.10">
    <property type="entry name" value="Formyl transferase, C-terminal domain"/>
    <property type="match status" value="1"/>
</dbReference>
<dbReference type="Gene3D" id="3.40.50.170">
    <property type="entry name" value="Formyl transferase, N-terminal domain"/>
    <property type="match status" value="1"/>
</dbReference>
<dbReference type="HAMAP" id="MF_00182">
    <property type="entry name" value="Formyl_trans"/>
    <property type="match status" value="1"/>
</dbReference>
<dbReference type="InterPro" id="IPR005794">
    <property type="entry name" value="Fmt"/>
</dbReference>
<dbReference type="InterPro" id="IPR005793">
    <property type="entry name" value="Formyl_trans_C"/>
</dbReference>
<dbReference type="InterPro" id="IPR037022">
    <property type="entry name" value="Formyl_trans_C_sf"/>
</dbReference>
<dbReference type="InterPro" id="IPR002376">
    <property type="entry name" value="Formyl_transf_N"/>
</dbReference>
<dbReference type="InterPro" id="IPR036477">
    <property type="entry name" value="Formyl_transf_N_sf"/>
</dbReference>
<dbReference type="InterPro" id="IPR011034">
    <property type="entry name" value="Formyl_transferase-like_C_sf"/>
</dbReference>
<dbReference type="InterPro" id="IPR044135">
    <property type="entry name" value="Met-tRNA-FMT_C"/>
</dbReference>
<dbReference type="InterPro" id="IPR041711">
    <property type="entry name" value="Met-tRNA-FMT_N"/>
</dbReference>
<dbReference type="NCBIfam" id="TIGR00460">
    <property type="entry name" value="fmt"/>
    <property type="match status" value="1"/>
</dbReference>
<dbReference type="PANTHER" id="PTHR11138">
    <property type="entry name" value="METHIONYL-TRNA FORMYLTRANSFERASE"/>
    <property type="match status" value="1"/>
</dbReference>
<dbReference type="PANTHER" id="PTHR11138:SF5">
    <property type="entry name" value="METHIONYL-TRNA FORMYLTRANSFERASE, MITOCHONDRIAL"/>
    <property type="match status" value="1"/>
</dbReference>
<dbReference type="Pfam" id="PF02911">
    <property type="entry name" value="Formyl_trans_C"/>
    <property type="match status" value="1"/>
</dbReference>
<dbReference type="Pfam" id="PF00551">
    <property type="entry name" value="Formyl_trans_N"/>
    <property type="match status" value="1"/>
</dbReference>
<dbReference type="SUPFAM" id="SSF50486">
    <property type="entry name" value="FMT C-terminal domain-like"/>
    <property type="match status" value="1"/>
</dbReference>
<dbReference type="SUPFAM" id="SSF53328">
    <property type="entry name" value="Formyltransferase"/>
    <property type="match status" value="1"/>
</dbReference>
<accession>A3MAA1</accession>
<comment type="function">
    <text evidence="1">Attaches a formyl group to the free amino group of methionyl-tRNA(fMet). The formyl group appears to play a dual role in the initiator identity of N-formylmethionyl-tRNA by promoting its recognition by IF2 and preventing the misappropriation of this tRNA by the elongation apparatus.</text>
</comment>
<comment type="catalytic activity">
    <reaction evidence="1">
        <text>L-methionyl-tRNA(fMet) + (6R)-10-formyltetrahydrofolate = N-formyl-L-methionyl-tRNA(fMet) + (6S)-5,6,7,8-tetrahydrofolate + H(+)</text>
        <dbReference type="Rhea" id="RHEA:24380"/>
        <dbReference type="Rhea" id="RHEA-COMP:9952"/>
        <dbReference type="Rhea" id="RHEA-COMP:9953"/>
        <dbReference type="ChEBI" id="CHEBI:15378"/>
        <dbReference type="ChEBI" id="CHEBI:57453"/>
        <dbReference type="ChEBI" id="CHEBI:78530"/>
        <dbReference type="ChEBI" id="CHEBI:78844"/>
        <dbReference type="ChEBI" id="CHEBI:195366"/>
        <dbReference type="EC" id="2.1.2.9"/>
    </reaction>
</comment>
<comment type="similarity">
    <text evidence="1">Belongs to the Fmt family.</text>
</comment>
<keyword id="KW-0648">Protein biosynthesis</keyword>
<keyword id="KW-0808">Transferase</keyword>
<proteinExistence type="inferred from homology"/>
<evidence type="ECO:0000255" key="1">
    <source>
        <dbReference type="HAMAP-Rule" id="MF_00182"/>
    </source>
</evidence>
<gene>
    <name evidence="1" type="primary">fmt</name>
    <name type="ordered locus">A1S_3456</name>
</gene>
<organism>
    <name type="scientific">Acinetobacter baumannii (strain ATCC 17978 / DSM 105126 / CIP 53.77 / LMG 1025 / NCDC KC755 / 5377)</name>
    <dbReference type="NCBI Taxonomy" id="400667"/>
    <lineage>
        <taxon>Bacteria</taxon>
        <taxon>Pseudomonadati</taxon>
        <taxon>Pseudomonadota</taxon>
        <taxon>Gammaproteobacteria</taxon>
        <taxon>Moraxellales</taxon>
        <taxon>Moraxellaceae</taxon>
        <taxon>Acinetobacter</taxon>
        <taxon>Acinetobacter calcoaceticus/baumannii complex</taxon>
    </lineage>
</organism>
<protein>
    <recommendedName>
        <fullName evidence="1">Methionyl-tRNA formyltransferase</fullName>
        <ecNumber evidence="1">2.1.2.9</ecNumber>
    </recommendedName>
</protein>